<gene>
    <name type="primary">YAP1802</name>
    <name type="ordered locus">YGR241C</name>
    <name type="ORF">G8610</name>
</gene>
<accession>P53309</accession>
<accession>D6VV22</accession>
<proteinExistence type="evidence at protein level"/>
<sequence>MSSLYTKLVKGATKIKMAPPKQKYVDPILSGTSSARGLQEITHALDIRLSDTAWTIVYKALIVLHLMIQQGEKDVTLRHYSHNLDVFQLRKISHTTKWSSNDMRALQRYDEYLKTRCEEYGRLGMDHLRDNYSSLKLGSKNQLSMDEELDHVESLEIQINALIRNKYSVSDLENHLLLYAFQLLVQDLLGLYNALNEGVITLLESFFELSIEHAKRTLDLYKDFVDMTEYVVRYLKIGKAVGLKIPVIKHITTKLINSLEEHLREETKRQRGEPSEPQQDRKPSTAISSTSSHNNNSNDKNKSIAQKKLEQIREQKRLLEQQLQNQQLLISPTVPQDAYNPFGSQQQDLNNDTFSFEPTQPQMTAQVPQPTANPFLIPQQQQQALQLTSASTMPQPSEIQITPNLNNQQTGMYASNLQYTPNFTGSGFGGYTTTENNAIMTGTLDPTKTGSNNPFSLENIAREQQQQNFQNSPNPFTLQQAQTTPILAHSQTGNPFQAQNVVTSPMGTYMTNPVAGQLQYASTGAQQQPQMMQGQQTGYVMVPTAFVPINQQQQQQQHQQENPNLIDI</sequence>
<evidence type="ECO:0000255" key="1">
    <source>
        <dbReference type="PROSITE-ProRule" id="PRU00243"/>
    </source>
</evidence>
<evidence type="ECO:0000256" key="2">
    <source>
        <dbReference type="SAM" id="MobiDB-lite"/>
    </source>
</evidence>
<evidence type="ECO:0000269" key="3">
    <source>
    </source>
</evidence>
<evidence type="ECO:0000269" key="4">
    <source>
    </source>
</evidence>
<evidence type="ECO:0000269" key="5">
    <source>
    </source>
</evidence>
<evidence type="ECO:0000269" key="6">
    <source>
    </source>
</evidence>
<evidence type="ECO:0000305" key="7"/>
<evidence type="ECO:0007744" key="8">
    <source>
    </source>
</evidence>
<evidence type="ECO:0007744" key="9">
    <source>
    </source>
</evidence>
<reference key="1">
    <citation type="journal article" date="1997" name="Yeast">
        <title>Sequencing of a 9.9 kb segment on the right arm of yeast chromosome VII reveals four open reading frames, including PFK1, the gene coding for succinyl-CoA synthetase (beta-chain) and two ORFs sharing homology with ORFs of the yeast chromosome VIII.</title>
        <authorList>
            <person name="Guerreiro P."/>
            <person name="Azevedo D."/>
            <person name="Barreiros T."/>
            <person name="Rodrigues-Pousada C."/>
        </authorList>
    </citation>
    <scope>NUCLEOTIDE SEQUENCE [GENOMIC DNA]</scope>
    <source>
        <strain>ATCC 204508 / S288c</strain>
    </source>
</reference>
<reference key="2">
    <citation type="journal article" date="1997" name="Nature">
        <title>The nucleotide sequence of Saccharomyces cerevisiae chromosome VII.</title>
        <authorList>
            <person name="Tettelin H."/>
            <person name="Agostoni-Carbone M.L."/>
            <person name="Albermann K."/>
            <person name="Albers M."/>
            <person name="Arroyo J."/>
            <person name="Backes U."/>
            <person name="Barreiros T."/>
            <person name="Bertani I."/>
            <person name="Bjourson A.J."/>
            <person name="Brueckner M."/>
            <person name="Bruschi C.V."/>
            <person name="Carignani G."/>
            <person name="Castagnoli L."/>
            <person name="Cerdan E."/>
            <person name="Clemente M.L."/>
            <person name="Coblenz A."/>
            <person name="Coglievina M."/>
            <person name="Coissac E."/>
            <person name="Defoor E."/>
            <person name="Del Bino S."/>
            <person name="Delius H."/>
            <person name="Delneri D."/>
            <person name="de Wergifosse P."/>
            <person name="Dujon B."/>
            <person name="Durand P."/>
            <person name="Entian K.-D."/>
            <person name="Eraso P."/>
            <person name="Escribano V."/>
            <person name="Fabiani L."/>
            <person name="Fartmann B."/>
            <person name="Feroli F."/>
            <person name="Feuermann M."/>
            <person name="Frontali L."/>
            <person name="Garcia-Gonzalez M."/>
            <person name="Garcia-Saez M.I."/>
            <person name="Goffeau A."/>
            <person name="Guerreiro P."/>
            <person name="Hani J."/>
            <person name="Hansen M."/>
            <person name="Hebling U."/>
            <person name="Hernandez K."/>
            <person name="Heumann K."/>
            <person name="Hilger F."/>
            <person name="Hofmann B."/>
            <person name="Indge K.J."/>
            <person name="James C.M."/>
            <person name="Klima R."/>
            <person name="Koetter P."/>
            <person name="Kramer B."/>
            <person name="Kramer W."/>
            <person name="Lauquin G."/>
            <person name="Leuther H."/>
            <person name="Louis E.J."/>
            <person name="Maillier E."/>
            <person name="Marconi A."/>
            <person name="Martegani E."/>
            <person name="Mazon M.J."/>
            <person name="Mazzoni C."/>
            <person name="McReynolds A.D.K."/>
            <person name="Melchioretto P."/>
            <person name="Mewes H.-W."/>
            <person name="Minenkova O."/>
            <person name="Mueller-Auer S."/>
            <person name="Nawrocki A."/>
            <person name="Netter P."/>
            <person name="Neu R."/>
            <person name="Nombela C."/>
            <person name="Oliver S.G."/>
            <person name="Panzeri L."/>
            <person name="Paoluzi S."/>
            <person name="Plevani P."/>
            <person name="Portetelle D."/>
            <person name="Portillo F."/>
            <person name="Potier S."/>
            <person name="Purnelle B."/>
            <person name="Rieger M."/>
            <person name="Riles L."/>
            <person name="Rinaldi T."/>
            <person name="Robben J."/>
            <person name="Rodrigues-Pousada C."/>
            <person name="Rodriguez-Belmonte E."/>
            <person name="Rodriguez-Torres A.M."/>
            <person name="Rose M."/>
            <person name="Ruzzi M."/>
            <person name="Saliola M."/>
            <person name="Sanchez-Perez M."/>
            <person name="Schaefer B."/>
            <person name="Schaefer M."/>
            <person name="Scharfe M."/>
            <person name="Schmidheini T."/>
            <person name="Schreer A."/>
            <person name="Skala J."/>
            <person name="Souciet J.-L."/>
            <person name="Steensma H.Y."/>
            <person name="Talla E."/>
            <person name="Thierry A."/>
            <person name="Vandenbol M."/>
            <person name="van der Aart Q.J.M."/>
            <person name="Van Dyck L."/>
            <person name="Vanoni M."/>
            <person name="Verhasselt P."/>
            <person name="Voet M."/>
            <person name="Volckaert G."/>
            <person name="Wambutt R."/>
            <person name="Watson M.D."/>
            <person name="Weber N."/>
            <person name="Wedler E."/>
            <person name="Wedler H."/>
            <person name="Wipfli P."/>
            <person name="Wolf K."/>
            <person name="Wright L.F."/>
            <person name="Zaccaria P."/>
            <person name="Zimmermann M."/>
            <person name="Zollner A."/>
            <person name="Kleine K."/>
        </authorList>
    </citation>
    <scope>NUCLEOTIDE SEQUENCE [LARGE SCALE GENOMIC DNA]</scope>
    <source>
        <strain>ATCC 204508 / S288c</strain>
    </source>
</reference>
<reference key="3">
    <citation type="journal article" date="2014" name="G3 (Bethesda)">
        <title>The reference genome sequence of Saccharomyces cerevisiae: Then and now.</title>
        <authorList>
            <person name="Engel S.R."/>
            <person name="Dietrich F.S."/>
            <person name="Fisk D.G."/>
            <person name="Binkley G."/>
            <person name="Balakrishnan R."/>
            <person name="Costanzo M.C."/>
            <person name="Dwight S.S."/>
            <person name="Hitz B.C."/>
            <person name="Karra K."/>
            <person name="Nash R.S."/>
            <person name="Weng S."/>
            <person name="Wong E.D."/>
            <person name="Lloyd P."/>
            <person name="Skrzypek M.S."/>
            <person name="Miyasato S.R."/>
            <person name="Simison M."/>
            <person name="Cherry J.M."/>
        </authorList>
    </citation>
    <scope>GENOME REANNOTATION</scope>
    <source>
        <strain>ATCC 204508 / S288c</strain>
    </source>
</reference>
<reference key="4">
    <citation type="journal article" date="1998" name="J. Cell Biol.">
        <title>Pan1p, yeast eps15, functions as a multivalent adaptor that coordinates protein-protein interactions essential for endocytosis.</title>
        <authorList>
            <person name="Wendland B."/>
            <person name="Emr S.D."/>
        </authorList>
    </citation>
    <scope>FUNCTION</scope>
    <scope>INTERACTION WITH CHC1; CLC1 AND PAN1</scope>
</reference>
<reference key="5">
    <citation type="journal article" date="2003" name="Genetics">
        <title>The Sla2p talin domain plays a role in endocytosis in Saccharomyces cerevisiae.</title>
        <authorList>
            <person name="Baggett J.J."/>
            <person name="D'Aquino K.E."/>
            <person name="Wendland B."/>
        </authorList>
    </citation>
    <scope>FUNCTION</scope>
</reference>
<reference key="6">
    <citation type="journal article" date="2003" name="Nature">
        <title>Global analysis of protein localization in budding yeast.</title>
        <authorList>
            <person name="Huh W.-K."/>
            <person name="Falvo J.V."/>
            <person name="Gerke L.C."/>
            <person name="Carroll A.S."/>
            <person name="Howson R.W."/>
            <person name="Weissman J.S."/>
            <person name="O'Shea E.K."/>
        </authorList>
    </citation>
    <scope>SUBCELLULAR LOCATION [LARGE SCALE ANALYSIS]</scope>
</reference>
<reference key="7">
    <citation type="journal article" date="2003" name="Nature">
        <title>Global analysis of protein expression in yeast.</title>
        <authorList>
            <person name="Ghaemmaghami S."/>
            <person name="Huh W.-K."/>
            <person name="Bower K."/>
            <person name="Howson R.W."/>
            <person name="Belle A."/>
            <person name="Dephoure N."/>
            <person name="O'Shea E.K."/>
            <person name="Weissman J.S."/>
        </authorList>
    </citation>
    <scope>LEVEL OF PROTEIN EXPRESSION [LARGE SCALE ANALYSIS]</scope>
</reference>
<reference key="8">
    <citation type="journal article" date="2009" name="Science">
        <title>Global analysis of Cdk1 substrate phosphorylation sites provides insights into evolution.</title>
        <authorList>
            <person name="Holt L.J."/>
            <person name="Tuch B.B."/>
            <person name="Villen J."/>
            <person name="Johnson A.D."/>
            <person name="Gygi S.P."/>
            <person name="Morgan D.O."/>
        </authorList>
    </citation>
    <scope>PHOSPHORYLATION [LARGE SCALE ANALYSIS] AT THR-449</scope>
    <scope>IDENTIFICATION BY MASS SPECTROMETRY [LARGE SCALE ANALYSIS]</scope>
</reference>
<reference key="9">
    <citation type="journal article" date="2012" name="Proteomics">
        <title>Sites of ubiquitin attachment in Saccharomyces cerevisiae.</title>
        <authorList>
            <person name="Starita L.M."/>
            <person name="Lo R.S."/>
            <person name="Eng J.K."/>
            <person name="von Haller P.D."/>
            <person name="Fields S."/>
        </authorList>
    </citation>
    <scope>UBIQUITINATION [LARGE SCALE ANALYSIS] AT LYS-282</scope>
    <scope>IDENTIFICATION BY MASS SPECTROMETRY [LARGE SCALE ANALYSIS]</scope>
</reference>
<comment type="function">
    <text evidence="5 6">Involved in endocytosis and clathrin cage assembly.</text>
</comment>
<comment type="subunit">
    <text evidence="6">Interacts with PAN1 and the clathrin heavy and light chains CHC1 and CLC1.</text>
</comment>
<comment type="subcellular location">
    <subcellularLocation>
        <location evidence="3">Bud</location>
    </subcellularLocation>
    <subcellularLocation>
        <location evidence="3">Bud neck</location>
    </subcellularLocation>
    <subcellularLocation>
        <location evidence="3">Cell membrane</location>
        <topology evidence="3">Peripheral membrane protein</topology>
        <orientation evidence="3">Cytoplasmic side</orientation>
    </subcellularLocation>
    <subcellularLocation>
        <location evidence="3">Cytoplasm</location>
    </subcellularLocation>
</comment>
<comment type="miscellaneous">
    <text evidence="4">Present with 6800 molecules/cell in log phase SD medium.</text>
</comment>
<comment type="similarity">
    <text evidence="7">Belongs to the AP180 family.</text>
</comment>
<dbReference type="EMBL" id="Z73026">
    <property type="protein sequence ID" value="CAA97270.1"/>
    <property type="molecule type" value="Genomic_DNA"/>
</dbReference>
<dbReference type="EMBL" id="BK006941">
    <property type="protein sequence ID" value="DAA08333.1"/>
    <property type="molecule type" value="Genomic_DNA"/>
</dbReference>
<dbReference type="PIR" id="S64567">
    <property type="entry name" value="S64567"/>
</dbReference>
<dbReference type="RefSeq" id="NP_011757.3">
    <property type="nucleotide sequence ID" value="NM_001181370.3"/>
</dbReference>
<dbReference type="SMR" id="P53309"/>
<dbReference type="BioGRID" id="33493">
    <property type="interactions" value="97"/>
</dbReference>
<dbReference type="DIP" id="DIP-2751N"/>
<dbReference type="ELM" id="P53309"/>
<dbReference type="FunCoup" id="P53309">
    <property type="interactions" value="407"/>
</dbReference>
<dbReference type="IntAct" id="P53309">
    <property type="interactions" value="21"/>
</dbReference>
<dbReference type="MINT" id="P53309"/>
<dbReference type="STRING" id="4932.YGR241C"/>
<dbReference type="GlyGen" id="P53309">
    <property type="glycosylation" value="1 site"/>
</dbReference>
<dbReference type="iPTMnet" id="P53309"/>
<dbReference type="PaxDb" id="4932-YGR241C"/>
<dbReference type="PeptideAtlas" id="P53309"/>
<dbReference type="EnsemblFungi" id="YGR241C_mRNA">
    <property type="protein sequence ID" value="YGR241C"/>
    <property type="gene ID" value="YGR241C"/>
</dbReference>
<dbReference type="GeneID" id="853157"/>
<dbReference type="KEGG" id="sce:YGR241C"/>
<dbReference type="AGR" id="SGD:S000003473"/>
<dbReference type="SGD" id="S000003473">
    <property type="gene designation" value="YAP1802"/>
</dbReference>
<dbReference type="VEuPathDB" id="FungiDB:YGR241C"/>
<dbReference type="eggNOG" id="KOG0251">
    <property type="taxonomic scope" value="Eukaryota"/>
</dbReference>
<dbReference type="GeneTree" id="ENSGT00950000183068"/>
<dbReference type="HOGENOM" id="CLU_025901_0_0_1"/>
<dbReference type="InParanoid" id="P53309"/>
<dbReference type="OMA" id="KTRCEEY"/>
<dbReference type="OrthoDB" id="44015at2759"/>
<dbReference type="BioCyc" id="YEAST:G3O-30918-MONOMER"/>
<dbReference type="BioGRID-ORCS" id="853157">
    <property type="hits" value="1 hit in 10 CRISPR screens"/>
</dbReference>
<dbReference type="PRO" id="PR:P53309"/>
<dbReference type="Proteomes" id="UP000002311">
    <property type="component" value="Chromosome VII"/>
</dbReference>
<dbReference type="RNAct" id="P53309">
    <property type="molecule type" value="protein"/>
</dbReference>
<dbReference type="GO" id="GO:0005935">
    <property type="term" value="C:cellular bud neck"/>
    <property type="evidence" value="ECO:0007005"/>
    <property type="project" value="SGD"/>
</dbReference>
<dbReference type="GO" id="GO:0005905">
    <property type="term" value="C:clathrin-coated pit"/>
    <property type="evidence" value="ECO:0000318"/>
    <property type="project" value="GO_Central"/>
</dbReference>
<dbReference type="GO" id="GO:0030136">
    <property type="term" value="C:clathrin-coated vesicle"/>
    <property type="evidence" value="ECO:0000318"/>
    <property type="project" value="GO_Central"/>
</dbReference>
<dbReference type="GO" id="GO:0005829">
    <property type="term" value="C:cytosol"/>
    <property type="evidence" value="ECO:0007005"/>
    <property type="project" value="SGD"/>
</dbReference>
<dbReference type="GO" id="GO:0005886">
    <property type="term" value="C:plasma membrane"/>
    <property type="evidence" value="ECO:0000314"/>
    <property type="project" value="SGD"/>
</dbReference>
<dbReference type="GO" id="GO:0005628">
    <property type="term" value="C:prospore membrane"/>
    <property type="evidence" value="ECO:0007005"/>
    <property type="project" value="SGD"/>
</dbReference>
<dbReference type="GO" id="GO:0005545">
    <property type="term" value="F:1-phosphatidylinositol binding"/>
    <property type="evidence" value="ECO:0000318"/>
    <property type="project" value="GO_Central"/>
</dbReference>
<dbReference type="GO" id="GO:0030276">
    <property type="term" value="F:clathrin binding"/>
    <property type="evidence" value="ECO:0000304"/>
    <property type="project" value="SGD"/>
</dbReference>
<dbReference type="GO" id="GO:0032050">
    <property type="term" value="F:clathrin heavy chain binding"/>
    <property type="evidence" value="ECO:0000318"/>
    <property type="project" value="GO_Central"/>
</dbReference>
<dbReference type="GO" id="GO:0005546">
    <property type="term" value="F:phosphatidylinositol-4,5-bisphosphate binding"/>
    <property type="evidence" value="ECO:0000318"/>
    <property type="project" value="GO_Central"/>
</dbReference>
<dbReference type="GO" id="GO:0000149">
    <property type="term" value="F:SNARE binding"/>
    <property type="evidence" value="ECO:0000318"/>
    <property type="project" value="GO_Central"/>
</dbReference>
<dbReference type="GO" id="GO:0048268">
    <property type="term" value="P:clathrin coat assembly"/>
    <property type="evidence" value="ECO:0007669"/>
    <property type="project" value="InterPro"/>
</dbReference>
<dbReference type="GO" id="GO:0072583">
    <property type="term" value="P:clathrin-dependent endocytosis"/>
    <property type="evidence" value="ECO:0000318"/>
    <property type="project" value="GO_Central"/>
</dbReference>
<dbReference type="GO" id="GO:0006897">
    <property type="term" value="P:endocytosis"/>
    <property type="evidence" value="ECO:0000353"/>
    <property type="project" value="SGD"/>
</dbReference>
<dbReference type="GO" id="GO:0006900">
    <property type="term" value="P:vesicle budding from membrane"/>
    <property type="evidence" value="ECO:0000318"/>
    <property type="project" value="GO_Central"/>
</dbReference>
<dbReference type="CDD" id="cd16988">
    <property type="entry name" value="ANTH_N_YAP180"/>
    <property type="match status" value="1"/>
</dbReference>
<dbReference type="FunFam" id="1.20.58.150:FF:000004">
    <property type="entry name" value="ENTH domain protein"/>
    <property type="match status" value="1"/>
</dbReference>
<dbReference type="Gene3D" id="1.25.40.90">
    <property type="match status" value="1"/>
</dbReference>
<dbReference type="Gene3D" id="1.20.58.150">
    <property type="entry name" value="ANTH domain"/>
    <property type="match status" value="1"/>
</dbReference>
<dbReference type="InterPro" id="IPR011417">
    <property type="entry name" value="ANTH_dom"/>
</dbReference>
<dbReference type="InterPro" id="IPR014712">
    <property type="entry name" value="ANTH_dom_sf"/>
</dbReference>
<dbReference type="InterPro" id="IPR045192">
    <property type="entry name" value="AP180-like"/>
</dbReference>
<dbReference type="InterPro" id="IPR013809">
    <property type="entry name" value="ENTH"/>
</dbReference>
<dbReference type="InterPro" id="IPR008942">
    <property type="entry name" value="ENTH_VHS"/>
</dbReference>
<dbReference type="PANTHER" id="PTHR22951">
    <property type="entry name" value="CLATHRIN ASSEMBLY PROTEIN"/>
    <property type="match status" value="1"/>
</dbReference>
<dbReference type="PANTHER" id="PTHR22951:SF5">
    <property type="entry name" value="PHOSPHATIDYLINOSITOL-BINDING CLATHRIN ASSEMBLY PROTEIN LAP"/>
    <property type="match status" value="1"/>
</dbReference>
<dbReference type="Pfam" id="PF07651">
    <property type="entry name" value="ANTH"/>
    <property type="match status" value="1"/>
</dbReference>
<dbReference type="SMART" id="SM00273">
    <property type="entry name" value="ENTH"/>
    <property type="match status" value="1"/>
</dbReference>
<dbReference type="SUPFAM" id="SSF48464">
    <property type="entry name" value="ENTH/VHS domain"/>
    <property type="match status" value="1"/>
</dbReference>
<dbReference type="SUPFAM" id="SSF89009">
    <property type="entry name" value="GAT-like domain"/>
    <property type="match status" value="1"/>
</dbReference>
<dbReference type="PROSITE" id="PS50942">
    <property type="entry name" value="ENTH"/>
    <property type="match status" value="1"/>
</dbReference>
<feature type="chain" id="PRO_0000202856" description="Clathrin coat assembly protein AP180B">
    <location>
        <begin position="1"/>
        <end position="568"/>
    </location>
</feature>
<feature type="domain" description="ENTH" evidence="1">
    <location>
        <begin position="1"/>
        <end position="127"/>
    </location>
</feature>
<feature type="region of interest" description="Disordered" evidence="2">
    <location>
        <begin position="262"/>
        <end position="302"/>
    </location>
</feature>
<feature type="compositionally biased region" description="Basic and acidic residues" evidence="2">
    <location>
        <begin position="262"/>
        <end position="283"/>
    </location>
</feature>
<feature type="compositionally biased region" description="Low complexity" evidence="2">
    <location>
        <begin position="284"/>
        <end position="298"/>
    </location>
</feature>
<feature type="modified residue" description="Phosphothreonine" evidence="8">
    <location>
        <position position="449"/>
    </location>
</feature>
<feature type="cross-link" description="Glycyl lysine isopeptide (Lys-Gly) (interchain with G-Cter in ubiquitin)" evidence="9">
    <location>
        <position position="282"/>
    </location>
</feature>
<name>AP18B_YEAST</name>
<organism>
    <name type="scientific">Saccharomyces cerevisiae (strain ATCC 204508 / S288c)</name>
    <name type="common">Baker's yeast</name>
    <dbReference type="NCBI Taxonomy" id="559292"/>
    <lineage>
        <taxon>Eukaryota</taxon>
        <taxon>Fungi</taxon>
        <taxon>Dikarya</taxon>
        <taxon>Ascomycota</taxon>
        <taxon>Saccharomycotina</taxon>
        <taxon>Saccharomycetes</taxon>
        <taxon>Saccharomycetales</taxon>
        <taxon>Saccharomycetaceae</taxon>
        <taxon>Saccharomyces</taxon>
    </lineage>
</organism>
<keyword id="KW-1003">Cell membrane</keyword>
<keyword id="KW-0963">Cytoplasm</keyword>
<keyword id="KW-0254">Endocytosis</keyword>
<keyword id="KW-1017">Isopeptide bond</keyword>
<keyword id="KW-0472">Membrane</keyword>
<keyword id="KW-0597">Phosphoprotein</keyword>
<keyword id="KW-1185">Reference proteome</keyword>
<keyword id="KW-0832">Ubl conjugation</keyword>
<protein>
    <recommendedName>
        <fullName>Clathrin coat assembly protein AP180B</fullName>
    </recommendedName>
</protein>